<geneLocation type="mitochondrion"/>
<proteinExistence type="inferred from homology"/>
<protein>
    <recommendedName>
        <fullName>Cytochrome b</fullName>
    </recommendedName>
    <alternativeName>
        <fullName>Complex III subunit 3</fullName>
    </alternativeName>
    <alternativeName>
        <fullName>Complex III subunit III</fullName>
    </alternativeName>
    <alternativeName>
        <fullName>Cytochrome b-c1 complex subunit 3</fullName>
    </alternativeName>
    <alternativeName>
        <fullName>Ubiquinol-cytochrome-c reductase complex cytochrome b subunit</fullName>
    </alternativeName>
</protein>
<reference key="1">
    <citation type="journal article" date="1996" name="Genomics">
        <title>Complete nucleotide sequences of the domestic cat (Felis catus) mitochondrial genome and a transposed mtDNA tandem repeat (Numt) in the nuclear genome.</title>
        <authorList>
            <person name="Lopez J.V."/>
            <person name="Cevario S."/>
            <person name="O'Brien S.J."/>
        </authorList>
    </citation>
    <scope>NUCLEOTIDE SEQUENCE [LARGE SCALE GENOMIC DNA]</scope>
    <source>
        <strain evidence="6">Abyssinian</strain>
        <tissue>Blood</tissue>
    </source>
</reference>
<reference key="2">
    <citation type="journal article" date="1995" name="J. Mol. Evol.">
        <title>A molecular view of pinniped relationships with particular emphasis on the true seals.</title>
        <authorList>
            <person name="Arnason U."/>
            <person name="Bodin K."/>
            <person name="Gullberg A."/>
            <person name="Ledje C."/>
            <person name="Mouchaty S."/>
        </authorList>
    </citation>
    <scope>NUCLEOTIDE SEQUENCE [GENOMIC DNA]</scope>
</reference>
<reference key="3">
    <citation type="journal article" date="1994" name="Zool. Sci.">
        <title>Molecular phylogenetic status of the iriomote cat Felis iriomotensis, inferred from mitochondrial DNA sequence analysis.</title>
        <authorList>
            <person name="Masuda R."/>
            <person name="Yoshida M.C."/>
            <person name="Shinyashiki F."/>
            <person name="Bando G."/>
        </authorList>
    </citation>
    <scope>NUCLEOTIDE SEQUENCE [GENOMIC DNA] OF 1-134</scope>
</reference>
<name>CYB_FELCA</name>
<organism>
    <name type="scientific">Felis catus</name>
    <name type="common">Cat</name>
    <name type="synonym">Felis silvestris catus</name>
    <dbReference type="NCBI Taxonomy" id="9685"/>
    <lineage>
        <taxon>Eukaryota</taxon>
        <taxon>Metazoa</taxon>
        <taxon>Chordata</taxon>
        <taxon>Craniata</taxon>
        <taxon>Vertebrata</taxon>
        <taxon>Euteleostomi</taxon>
        <taxon>Mammalia</taxon>
        <taxon>Eutheria</taxon>
        <taxon>Laurasiatheria</taxon>
        <taxon>Carnivora</taxon>
        <taxon>Feliformia</taxon>
        <taxon>Felidae</taxon>
        <taxon>Felinae</taxon>
        <taxon>Felis</taxon>
    </lineage>
</organism>
<gene>
    <name type="primary">MT-CYB</name>
    <name type="synonym">COB</name>
    <name type="synonym">CYTB</name>
    <name type="synonym">MTCYB</name>
</gene>
<comment type="function">
    <text evidence="2">Component of the ubiquinol-cytochrome c reductase complex (complex III or cytochrome b-c1 complex) that is part of the mitochondrial respiratory chain. The b-c1 complex mediates electron transfer from ubiquinol to cytochrome c. Contributes to the generation of a proton gradient across the mitochondrial membrane that is then used for ATP synthesis.</text>
</comment>
<comment type="cofactor">
    <cofactor evidence="2">
        <name>heme b</name>
        <dbReference type="ChEBI" id="CHEBI:60344"/>
    </cofactor>
    <text evidence="2">Binds 2 heme b groups non-covalently.</text>
</comment>
<comment type="subunit">
    <text evidence="2">The cytochrome bc1 complex contains 11 subunits: 3 respiratory subunits (MT-CYB, CYC1 and UQCRFS1), 2 core proteins (UQCRC1 and UQCRC2) and 6 low-molecular weight proteins (UQCRH/QCR6, UQCRB/QCR7, UQCRQ/QCR8, UQCR10/QCR9, UQCR11/QCR10 and a cleavage product of UQCRFS1). This cytochrome bc1 complex then forms a dimer.</text>
</comment>
<comment type="subcellular location">
    <subcellularLocation>
        <location evidence="2">Mitochondrion inner membrane</location>
        <topology evidence="2">Multi-pass membrane protein</topology>
    </subcellularLocation>
</comment>
<comment type="miscellaneous">
    <text evidence="1">Heme 1 (or BL or b562) is low-potential and absorbs at about 562 nm, and heme 2 (or BH or b566) is high-potential and absorbs at about 566 nm.</text>
</comment>
<comment type="similarity">
    <text evidence="3 4">Belongs to the cytochrome b family.</text>
</comment>
<comment type="caution">
    <text evidence="2">The full-length protein contains only eight transmembrane helices, not nine as predicted by bioinformatics tools.</text>
</comment>
<accession>P48886</accession>
<accession>Q34512</accession>
<feature type="chain" id="PRO_0000060972" description="Cytochrome b">
    <location>
        <begin position="1"/>
        <end position="379"/>
    </location>
</feature>
<feature type="transmembrane region" description="Helical" evidence="2">
    <location>
        <begin position="33"/>
        <end position="53"/>
    </location>
</feature>
<feature type="transmembrane region" description="Helical" evidence="2">
    <location>
        <begin position="77"/>
        <end position="98"/>
    </location>
</feature>
<feature type="transmembrane region" description="Helical" evidence="2">
    <location>
        <begin position="113"/>
        <end position="133"/>
    </location>
</feature>
<feature type="transmembrane region" description="Helical" evidence="2">
    <location>
        <begin position="178"/>
        <end position="198"/>
    </location>
</feature>
<feature type="transmembrane region" description="Helical" evidence="2">
    <location>
        <begin position="226"/>
        <end position="246"/>
    </location>
</feature>
<feature type="transmembrane region" description="Helical" evidence="2">
    <location>
        <begin position="288"/>
        <end position="308"/>
    </location>
</feature>
<feature type="transmembrane region" description="Helical" evidence="2">
    <location>
        <begin position="320"/>
        <end position="340"/>
    </location>
</feature>
<feature type="transmembrane region" description="Helical" evidence="2">
    <location>
        <begin position="347"/>
        <end position="367"/>
    </location>
</feature>
<feature type="binding site" description="axial binding residue" evidence="2">
    <location>
        <position position="83"/>
    </location>
    <ligand>
        <name>heme b</name>
        <dbReference type="ChEBI" id="CHEBI:60344"/>
        <label>b562</label>
    </ligand>
    <ligandPart>
        <name>Fe</name>
        <dbReference type="ChEBI" id="CHEBI:18248"/>
    </ligandPart>
</feature>
<feature type="binding site" description="axial binding residue" evidence="2">
    <location>
        <position position="97"/>
    </location>
    <ligand>
        <name>heme b</name>
        <dbReference type="ChEBI" id="CHEBI:60344"/>
        <label>b566</label>
    </ligand>
    <ligandPart>
        <name>Fe</name>
        <dbReference type="ChEBI" id="CHEBI:18248"/>
    </ligandPart>
</feature>
<feature type="binding site" description="axial binding residue" evidence="2">
    <location>
        <position position="182"/>
    </location>
    <ligand>
        <name>heme b</name>
        <dbReference type="ChEBI" id="CHEBI:60344"/>
        <label>b562</label>
    </ligand>
    <ligandPart>
        <name>Fe</name>
        <dbReference type="ChEBI" id="CHEBI:18248"/>
    </ligandPart>
</feature>
<feature type="binding site" description="axial binding residue" evidence="2">
    <location>
        <position position="196"/>
    </location>
    <ligand>
        <name>heme b</name>
        <dbReference type="ChEBI" id="CHEBI:60344"/>
        <label>b566</label>
    </ligand>
    <ligandPart>
        <name>Fe</name>
        <dbReference type="ChEBI" id="CHEBI:18248"/>
    </ligandPart>
</feature>
<feature type="binding site" evidence="2">
    <location>
        <position position="201"/>
    </location>
    <ligand>
        <name>a ubiquinone</name>
        <dbReference type="ChEBI" id="CHEBI:16389"/>
    </ligand>
</feature>
<feature type="sequence conflict" description="In Ref. 2; CAA57739." evidence="5" ref="2">
    <original>A</original>
    <variation>T</variation>
    <location>
        <position position="23"/>
    </location>
</feature>
<feature type="sequence conflict" description="In Ref. 2; CAA57739 and 3; BAA06039." evidence="5" ref="2 3">
    <original>T</original>
    <variation>I</variation>
    <location>
        <position position="42"/>
    </location>
</feature>
<feature type="sequence conflict" description="In Ref. 2; CAA57739." evidence="5" ref="2">
    <original>G</original>
    <variation>A</variation>
    <location>
        <position position="180"/>
    </location>
</feature>
<feature type="sequence conflict" description="In Ref. 2; CAA57739." evidence="5" ref="2">
    <original>G</original>
    <variation>A</variation>
    <location>
        <position position="194"/>
    </location>
</feature>
<feature type="sequence conflict" description="In Ref. 2; CAA57739." evidence="5" ref="2">
    <original>M</original>
    <variation>T</variation>
    <location>
        <position position="240"/>
    </location>
</feature>
<evidence type="ECO:0000250" key="1"/>
<evidence type="ECO:0000250" key="2">
    <source>
        <dbReference type="UniProtKB" id="P00157"/>
    </source>
</evidence>
<evidence type="ECO:0000255" key="3">
    <source>
        <dbReference type="PROSITE-ProRule" id="PRU00967"/>
    </source>
</evidence>
<evidence type="ECO:0000255" key="4">
    <source>
        <dbReference type="PROSITE-ProRule" id="PRU00968"/>
    </source>
</evidence>
<evidence type="ECO:0000305" key="5"/>
<evidence type="ECO:0000312" key="6">
    <source>
        <dbReference type="Proteomes" id="UP000011712"/>
    </source>
</evidence>
<dbReference type="EMBL" id="U20753">
    <property type="protein sequence ID" value="AAC48581.1"/>
    <property type="molecule type" value="Genomic_DNA"/>
</dbReference>
<dbReference type="EMBL" id="X82296">
    <property type="protein sequence ID" value="CAA57739.1"/>
    <property type="molecule type" value="Genomic_DNA"/>
</dbReference>
<dbReference type="EMBL" id="D28903">
    <property type="protein sequence ID" value="BAA06039.1"/>
    <property type="molecule type" value="Genomic_DNA"/>
</dbReference>
<dbReference type="PIR" id="T11414">
    <property type="entry name" value="T11414"/>
</dbReference>
<dbReference type="RefSeq" id="NP_008263.1">
    <property type="nucleotide sequence ID" value="NC_001700.1"/>
</dbReference>
<dbReference type="SMR" id="P48886"/>
<dbReference type="FunCoup" id="P48886">
    <property type="interactions" value="12"/>
</dbReference>
<dbReference type="STRING" id="9685.ENSFCAP00000025721"/>
<dbReference type="PaxDb" id="9685-ENSFCAP00000025721"/>
<dbReference type="Ensembl" id="ENSFCAT00000032662.1">
    <property type="protein sequence ID" value="ENSFCAP00000025721.1"/>
    <property type="gene ID" value="ENSFCAG00000032077.1"/>
</dbReference>
<dbReference type="GeneID" id="807931"/>
<dbReference type="KEGG" id="fca:807931"/>
<dbReference type="CTD" id="4519"/>
<dbReference type="VGNC" id="VGNC:80933">
    <property type="gene designation" value="MT-CYB"/>
</dbReference>
<dbReference type="eggNOG" id="KOG4663">
    <property type="taxonomic scope" value="Eukaryota"/>
</dbReference>
<dbReference type="GeneTree" id="ENSGT00390000017948"/>
<dbReference type="HOGENOM" id="CLU_031114_3_0_1"/>
<dbReference type="InParanoid" id="P48886"/>
<dbReference type="OMA" id="NISAWWN"/>
<dbReference type="OrthoDB" id="244at2759"/>
<dbReference type="Proteomes" id="UP000011712">
    <property type="component" value="Mitochondrion"/>
</dbReference>
<dbReference type="Bgee" id="ENSFCAG00000032077">
    <property type="expression patterns" value="Expressed in prefrontal cortex and 10 other cell types or tissues"/>
</dbReference>
<dbReference type="GO" id="GO:0016020">
    <property type="term" value="C:membrane"/>
    <property type="evidence" value="ECO:0000318"/>
    <property type="project" value="GO_Central"/>
</dbReference>
<dbReference type="GO" id="GO:0005743">
    <property type="term" value="C:mitochondrial inner membrane"/>
    <property type="evidence" value="ECO:0007669"/>
    <property type="project" value="UniProtKB-SubCell"/>
</dbReference>
<dbReference type="GO" id="GO:0045275">
    <property type="term" value="C:respiratory chain complex III"/>
    <property type="evidence" value="ECO:0000318"/>
    <property type="project" value="GO_Central"/>
</dbReference>
<dbReference type="GO" id="GO:0046872">
    <property type="term" value="F:metal ion binding"/>
    <property type="evidence" value="ECO:0007669"/>
    <property type="project" value="UniProtKB-KW"/>
</dbReference>
<dbReference type="GO" id="GO:0008121">
    <property type="term" value="F:ubiquinol-cytochrome-c reductase activity"/>
    <property type="evidence" value="ECO:0007669"/>
    <property type="project" value="InterPro"/>
</dbReference>
<dbReference type="GO" id="GO:0006122">
    <property type="term" value="P:mitochondrial electron transport, ubiquinol to cytochrome c"/>
    <property type="evidence" value="ECO:0000318"/>
    <property type="project" value="GO_Central"/>
</dbReference>
<dbReference type="CDD" id="cd00290">
    <property type="entry name" value="cytochrome_b_C"/>
    <property type="match status" value="1"/>
</dbReference>
<dbReference type="CDD" id="cd00284">
    <property type="entry name" value="Cytochrome_b_N"/>
    <property type="match status" value="1"/>
</dbReference>
<dbReference type="FunFam" id="1.20.810.10:FF:000002">
    <property type="entry name" value="Cytochrome b"/>
    <property type="match status" value="1"/>
</dbReference>
<dbReference type="Gene3D" id="1.20.810.10">
    <property type="entry name" value="Cytochrome Bc1 Complex, Chain C"/>
    <property type="match status" value="1"/>
</dbReference>
<dbReference type="InterPro" id="IPR005798">
    <property type="entry name" value="Cyt_b/b6_C"/>
</dbReference>
<dbReference type="InterPro" id="IPR036150">
    <property type="entry name" value="Cyt_b/b6_C_sf"/>
</dbReference>
<dbReference type="InterPro" id="IPR005797">
    <property type="entry name" value="Cyt_b/b6_N"/>
</dbReference>
<dbReference type="InterPro" id="IPR027387">
    <property type="entry name" value="Cytb/b6-like_sf"/>
</dbReference>
<dbReference type="InterPro" id="IPR030689">
    <property type="entry name" value="Cytochrome_b"/>
</dbReference>
<dbReference type="InterPro" id="IPR048260">
    <property type="entry name" value="Cytochrome_b_C_euk/bac"/>
</dbReference>
<dbReference type="InterPro" id="IPR048259">
    <property type="entry name" value="Cytochrome_b_N_euk/bac"/>
</dbReference>
<dbReference type="InterPro" id="IPR016174">
    <property type="entry name" value="Di-haem_cyt_TM"/>
</dbReference>
<dbReference type="PANTHER" id="PTHR19271">
    <property type="entry name" value="CYTOCHROME B"/>
    <property type="match status" value="1"/>
</dbReference>
<dbReference type="PANTHER" id="PTHR19271:SF16">
    <property type="entry name" value="CYTOCHROME B"/>
    <property type="match status" value="1"/>
</dbReference>
<dbReference type="Pfam" id="PF00032">
    <property type="entry name" value="Cytochrom_B_C"/>
    <property type="match status" value="1"/>
</dbReference>
<dbReference type="Pfam" id="PF00033">
    <property type="entry name" value="Cytochrome_B"/>
    <property type="match status" value="1"/>
</dbReference>
<dbReference type="PIRSF" id="PIRSF038885">
    <property type="entry name" value="COB"/>
    <property type="match status" value="1"/>
</dbReference>
<dbReference type="SUPFAM" id="SSF81648">
    <property type="entry name" value="a domain/subunit of cytochrome bc1 complex (Ubiquinol-cytochrome c reductase)"/>
    <property type="match status" value="1"/>
</dbReference>
<dbReference type="SUPFAM" id="SSF81342">
    <property type="entry name" value="Transmembrane di-heme cytochromes"/>
    <property type="match status" value="1"/>
</dbReference>
<dbReference type="PROSITE" id="PS51003">
    <property type="entry name" value="CYTB_CTER"/>
    <property type="match status" value="1"/>
</dbReference>
<dbReference type="PROSITE" id="PS51002">
    <property type="entry name" value="CYTB_NTER"/>
    <property type="match status" value="1"/>
</dbReference>
<sequence length="379" mass="42631">MTNIRKSHPLIKIINHSFIDLPAPSNISAWWNFGSLLGVCLTLQILTGLFLAMHYTSDTMTAFSSVTHICRDVNYGWIIRYLHANGASMFFICLYMHVGRGMYYGSYTFSETWNIGIMLLFTVMATAFMGYVLPWGQMSFWGATVITNLLSAIPYIGTELVEWIWGGFSVDKATLTRFFGFHFILPFIISALAGVHLLFLHETGSNNPSGITSDSDKIPFHPYYTIKDILGLLVLVLTLMLLVLFSPDLLGDPDNYIPANPLNTPPHIKPEWYFLFAYAILRSIPNKLGGVLALVLSILVLAIIPILHTSKQRGMMFRPLSQCLFWLLVADLLTLTWIGGQPVEHPFITIGQLASILYFSTLLILMPISGIIENRLLKW</sequence>
<keyword id="KW-0249">Electron transport</keyword>
<keyword id="KW-0349">Heme</keyword>
<keyword id="KW-0408">Iron</keyword>
<keyword id="KW-0472">Membrane</keyword>
<keyword id="KW-0479">Metal-binding</keyword>
<keyword id="KW-0496">Mitochondrion</keyword>
<keyword id="KW-0999">Mitochondrion inner membrane</keyword>
<keyword id="KW-1185">Reference proteome</keyword>
<keyword id="KW-0679">Respiratory chain</keyword>
<keyword id="KW-0812">Transmembrane</keyword>
<keyword id="KW-1133">Transmembrane helix</keyword>
<keyword id="KW-0813">Transport</keyword>
<keyword id="KW-0830">Ubiquinone</keyword>